<sequence length="9" mass="990">EATVDMPLD</sequence>
<reference evidence="3" key="1">
    <citation type="journal article" date="1997" name="J. Biol. Chem.">
        <title>Differential extraction and protein sequencing reveals major differences in patterns of primary cell wall proteins from plants.</title>
        <authorList>
            <person name="Robertson D."/>
            <person name="Mitchell G.P."/>
            <person name="Gilroy J.S."/>
            <person name="Gerrish C."/>
            <person name="Bolwell G.P."/>
            <person name="Slabas A.R."/>
        </authorList>
    </citation>
    <scope>PROTEIN SEQUENCE</scope>
    <scope>SUBCELLULAR LOCATION</scope>
    <source>
        <strain>cv. Landsberg erecta</strain>
    </source>
</reference>
<accession>P80841</accession>
<organism>
    <name type="scientific">Arabidopsis thaliana</name>
    <name type="common">Mouse-ear cress</name>
    <dbReference type="NCBI Taxonomy" id="3702"/>
    <lineage>
        <taxon>Eukaryota</taxon>
        <taxon>Viridiplantae</taxon>
        <taxon>Streptophyta</taxon>
        <taxon>Embryophyta</taxon>
        <taxon>Tracheophyta</taxon>
        <taxon>Spermatophyta</taxon>
        <taxon>Magnoliopsida</taxon>
        <taxon>eudicotyledons</taxon>
        <taxon>Gunneridae</taxon>
        <taxon>Pentapetalae</taxon>
        <taxon>rosids</taxon>
        <taxon>malvids</taxon>
        <taxon>Brassicales</taxon>
        <taxon>Brassicaceae</taxon>
        <taxon>Camelineae</taxon>
        <taxon>Arabidopsis</taxon>
    </lineage>
</organism>
<feature type="chain" id="PRO_0000079690" description="55 kDa cell wall protein">
    <location>
        <begin position="1"/>
        <end position="9" status="greater than"/>
    </location>
</feature>
<feature type="non-terminal residue" evidence="2">
    <location>
        <position position="9"/>
    </location>
</feature>
<dbReference type="GO" id="GO:0005576">
    <property type="term" value="C:extracellular region"/>
    <property type="evidence" value="ECO:0007669"/>
    <property type="project" value="UniProtKB-KW"/>
</dbReference>
<comment type="subcellular location">
    <subcellularLocation>
        <location evidence="1">Secreted</location>
        <location evidence="1">Cell wall</location>
    </subcellularLocation>
</comment>
<keyword id="KW-0134">Cell wall</keyword>
<keyword id="KW-0903">Direct protein sequencing</keyword>
<keyword id="KW-0964">Secreted</keyword>
<protein>
    <recommendedName>
        <fullName>55 kDa cell wall protein</fullName>
    </recommendedName>
</protein>
<proteinExistence type="evidence at protein level"/>
<evidence type="ECO:0000269" key="1">
    <source>
    </source>
</evidence>
<evidence type="ECO:0000303" key="2">
    <source>
    </source>
</evidence>
<evidence type="ECO:0000305" key="3"/>
<name>CWP20_ARATH</name>